<proteinExistence type="inferred from homology"/>
<reference key="1">
    <citation type="journal article" date="2002" name="Nature">
        <title>Comparison of the genomes of two Xanthomonas pathogens with differing host specificities.</title>
        <authorList>
            <person name="da Silva A.C.R."/>
            <person name="Ferro J.A."/>
            <person name="Reinach F.C."/>
            <person name="Farah C.S."/>
            <person name="Furlan L.R."/>
            <person name="Quaggio R.B."/>
            <person name="Monteiro-Vitorello C.B."/>
            <person name="Van Sluys M.A."/>
            <person name="Almeida N.F. Jr."/>
            <person name="Alves L.M.C."/>
            <person name="do Amaral A.M."/>
            <person name="Bertolini M.C."/>
            <person name="Camargo L.E.A."/>
            <person name="Camarotte G."/>
            <person name="Cannavan F."/>
            <person name="Cardozo J."/>
            <person name="Chambergo F."/>
            <person name="Ciapina L.P."/>
            <person name="Cicarelli R.M.B."/>
            <person name="Coutinho L.L."/>
            <person name="Cursino-Santos J.R."/>
            <person name="El-Dorry H."/>
            <person name="Faria J.B."/>
            <person name="Ferreira A.J.S."/>
            <person name="Ferreira R.C.C."/>
            <person name="Ferro M.I.T."/>
            <person name="Formighieri E.F."/>
            <person name="Franco M.C."/>
            <person name="Greggio C.C."/>
            <person name="Gruber A."/>
            <person name="Katsuyama A.M."/>
            <person name="Kishi L.T."/>
            <person name="Leite R.P."/>
            <person name="Lemos E.G.M."/>
            <person name="Lemos M.V.F."/>
            <person name="Locali E.C."/>
            <person name="Machado M.A."/>
            <person name="Madeira A.M.B.N."/>
            <person name="Martinez-Rossi N.M."/>
            <person name="Martins E.C."/>
            <person name="Meidanis J."/>
            <person name="Menck C.F.M."/>
            <person name="Miyaki C.Y."/>
            <person name="Moon D.H."/>
            <person name="Moreira L.M."/>
            <person name="Novo M.T.M."/>
            <person name="Okura V.K."/>
            <person name="Oliveira M.C."/>
            <person name="Oliveira V.R."/>
            <person name="Pereira H.A."/>
            <person name="Rossi A."/>
            <person name="Sena J.A.D."/>
            <person name="Silva C."/>
            <person name="de Souza R.F."/>
            <person name="Spinola L.A.F."/>
            <person name="Takita M.A."/>
            <person name="Tamura R.E."/>
            <person name="Teixeira E.C."/>
            <person name="Tezza R.I.D."/>
            <person name="Trindade dos Santos M."/>
            <person name="Truffi D."/>
            <person name="Tsai S.M."/>
            <person name="White F.F."/>
            <person name="Setubal J.C."/>
            <person name="Kitajima J.P."/>
        </authorList>
    </citation>
    <scope>NUCLEOTIDE SEQUENCE [LARGE SCALE GENOMIC DNA]</scope>
    <source>
        <strain>ATCC 33913 / DSM 3586 / NCPPB 528 / LMG 568 / P 25</strain>
    </source>
</reference>
<organism>
    <name type="scientific">Xanthomonas campestris pv. campestris (strain ATCC 33913 / DSM 3586 / NCPPB 528 / LMG 568 / P 25)</name>
    <dbReference type="NCBI Taxonomy" id="190485"/>
    <lineage>
        <taxon>Bacteria</taxon>
        <taxon>Pseudomonadati</taxon>
        <taxon>Pseudomonadota</taxon>
        <taxon>Gammaproteobacteria</taxon>
        <taxon>Lysobacterales</taxon>
        <taxon>Lysobacteraceae</taxon>
        <taxon>Xanthomonas</taxon>
    </lineage>
</organism>
<gene>
    <name type="ordered locus">XCC2806</name>
</gene>
<name>Y2806_XANCP</name>
<keyword id="KW-0067">ATP-binding</keyword>
<keyword id="KW-0342">GTP-binding</keyword>
<keyword id="KW-0547">Nucleotide-binding</keyword>
<keyword id="KW-1185">Reference proteome</keyword>
<dbReference type="EMBL" id="AE008922">
    <property type="protein sequence ID" value="AAM42078.1"/>
    <property type="molecule type" value="Genomic_DNA"/>
</dbReference>
<dbReference type="RefSeq" id="NP_638154.1">
    <property type="nucleotide sequence ID" value="NC_003902.1"/>
</dbReference>
<dbReference type="SMR" id="Q8P708"/>
<dbReference type="STRING" id="190485.XCC2806"/>
<dbReference type="EnsemblBacteria" id="AAM42078">
    <property type="protein sequence ID" value="AAM42078"/>
    <property type="gene ID" value="XCC2806"/>
</dbReference>
<dbReference type="KEGG" id="xcc:XCC2806"/>
<dbReference type="PATRIC" id="fig|190485.4.peg.2994"/>
<dbReference type="eggNOG" id="COG1660">
    <property type="taxonomic scope" value="Bacteria"/>
</dbReference>
<dbReference type="HOGENOM" id="CLU_059558_1_1_6"/>
<dbReference type="OrthoDB" id="9784461at2"/>
<dbReference type="Proteomes" id="UP000001010">
    <property type="component" value="Chromosome"/>
</dbReference>
<dbReference type="GO" id="GO:0005524">
    <property type="term" value="F:ATP binding"/>
    <property type="evidence" value="ECO:0007669"/>
    <property type="project" value="UniProtKB-UniRule"/>
</dbReference>
<dbReference type="GO" id="GO:0005525">
    <property type="term" value="F:GTP binding"/>
    <property type="evidence" value="ECO:0007669"/>
    <property type="project" value="UniProtKB-UniRule"/>
</dbReference>
<dbReference type="GO" id="GO:0060090">
    <property type="term" value="F:molecular adaptor activity"/>
    <property type="evidence" value="ECO:0000318"/>
    <property type="project" value="GO_Central"/>
</dbReference>
<dbReference type="HAMAP" id="MF_00636">
    <property type="entry name" value="RapZ_like"/>
    <property type="match status" value="1"/>
</dbReference>
<dbReference type="InterPro" id="IPR027417">
    <property type="entry name" value="P-loop_NTPase"/>
</dbReference>
<dbReference type="InterPro" id="IPR005337">
    <property type="entry name" value="RapZ-like"/>
</dbReference>
<dbReference type="InterPro" id="IPR053930">
    <property type="entry name" value="RapZ-like_N"/>
</dbReference>
<dbReference type="InterPro" id="IPR053931">
    <property type="entry name" value="RapZ_C"/>
</dbReference>
<dbReference type="NCBIfam" id="NF003828">
    <property type="entry name" value="PRK05416.1"/>
    <property type="match status" value="1"/>
</dbReference>
<dbReference type="PANTHER" id="PTHR30448">
    <property type="entry name" value="RNASE ADAPTER PROTEIN RAPZ"/>
    <property type="match status" value="1"/>
</dbReference>
<dbReference type="PANTHER" id="PTHR30448:SF0">
    <property type="entry name" value="RNASE ADAPTER PROTEIN RAPZ"/>
    <property type="match status" value="1"/>
</dbReference>
<dbReference type="Pfam" id="PF22740">
    <property type="entry name" value="PapZ_C"/>
    <property type="match status" value="1"/>
</dbReference>
<dbReference type="Pfam" id="PF03668">
    <property type="entry name" value="RapZ-like_N"/>
    <property type="match status" value="1"/>
</dbReference>
<dbReference type="PIRSF" id="PIRSF005052">
    <property type="entry name" value="P-loopkin"/>
    <property type="match status" value="1"/>
</dbReference>
<dbReference type="SUPFAM" id="SSF52540">
    <property type="entry name" value="P-loop containing nucleoside triphosphate hydrolases"/>
    <property type="match status" value="1"/>
</dbReference>
<protein>
    <recommendedName>
        <fullName evidence="1">Nucleotide-binding protein XCC2806</fullName>
    </recommendedName>
</protein>
<sequence>MIVSGLSGSGKSVALKTFEDLDYYCSDNLPVELLPDFVRSRLRGNPLGDQRLAVGIDVRSRSDLTQLAQWRQAAQEYGIEARLLFFEASDEALLKRYADTRRRHPLSQLGLALPEAITRERELTAPLRAQADAIIDTSALNVHQLRRRVVTEFALGNSDRLSLLFESFAYKRGVPAEADFVFDARVLPNPHWDPELRPLTGRDAGVRDYLDKEPDVIRYSAQIVDLLDTWLPRLRNDTRSYVTIAFGCTGGKHRSVYLAERMARHAREQGWPEVATFHREQD</sequence>
<evidence type="ECO:0000255" key="1">
    <source>
        <dbReference type="HAMAP-Rule" id="MF_00636"/>
    </source>
</evidence>
<comment type="function">
    <text evidence="1">Displays ATPase and GTPase activities.</text>
</comment>
<comment type="similarity">
    <text evidence="1">Belongs to the RapZ-like family.</text>
</comment>
<accession>Q8P708</accession>
<feature type="chain" id="PRO_0000107790" description="Nucleotide-binding protein XCC2806">
    <location>
        <begin position="1"/>
        <end position="282"/>
    </location>
</feature>
<feature type="binding site" evidence="1">
    <location>
        <begin position="5"/>
        <end position="12"/>
    </location>
    <ligand>
        <name>ATP</name>
        <dbReference type="ChEBI" id="CHEBI:30616"/>
    </ligand>
</feature>
<feature type="binding site" evidence="1">
    <location>
        <begin position="57"/>
        <end position="60"/>
    </location>
    <ligand>
        <name>GTP</name>
        <dbReference type="ChEBI" id="CHEBI:37565"/>
    </ligand>
</feature>